<dbReference type="PIR" id="S27192">
    <property type="entry name" value="S27192"/>
</dbReference>
<dbReference type="SMR" id="P24774"/>
<dbReference type="iPTMnet" id="P24774"/>
<dbReference type="Proteomes" id="UP000694395">
    <property type="component" value="Unplaced"/>
</dbReference>
<dbReference type="GO" id="GO:0005615">
    <property type="term" value="C:extracellular space"/>
    <property type="evidence" value="ECO:0000314"/>
    <property type="project" value="UniProtKB"/>
</dbReference>
<dbReference type="GO" id="GO:0060417">
    <property type="term" value="C:yolk"/>
    <property type="evidence" value="ECO:0000314"/>
    <property type="project" value="AgBase"/>
</dbReference>
<dbReference type="GO" id="GO:0019841">
    <property type="term" value="F:retinol binding"/>
    <property type="evidence" value="ECO:0007669"/>
    <property type="project" value="UniProtKB-KW"/>
</dbReference>
<dbReference type="GO" id="GO:0034632">
    <property type="term" value="F:retinol transmembrane transporter activity"/>
    <property type="evidence" value="ECO:0007669"/>
    <property type="project" value="InterPro"/>
</dbReference>
<dbReference type="CDD" id="cd00743">
    <property type="entry name" value="lipocalin_RBP_like"/>
    <property type="match status" value="1"/>
</dbReference>
<dbReference type="FunFam" id="2.40.128.20:FF:000004">
    <property type="entry name" value="Retinol-binding protein 4"/>
    <property type="match status" value="1"/>
</dbReference>
<dbReference type="Gene3D" id="2.40.128.20">
    <property type="match status" value="1"/>
</dbReference>
<dbReference type="InterPro" id="IPR012674">
    <property type="entry name" value="Calycin"/>
</dbReference>
<dbReference type="InterPro" id="IPR022271">
    <property type="entry name" value="Lipocalin_ApoD"/>
</dbReference>
<dbReference type="InterPro" id="IPR022272">
    <property type="entry name" value="Lipocalin_CS"/>
</dbReference>
<dbReference type="InterPro" id="IPR000566">
    <property type="entry name" value="Lipocln_cytosolic_FA-bd_dom"/>
</dbReference>
<dbReference type="InterPro" id="IPR002449">
    <property type="entry name" value="Retinol-bd/Purpurin"/>
</dbReference>
<dbReference type="PANTHER" id="PTHR11873">
    <property type="entry name" value="RETINOL-BINDING PROTEIN 4"/>
    <property type="match status" value="1"/>
</dbReference>
<dbReference type="PANTHER" id="PTHR11873:SF2">
    <property type="entry name" value="RETINOL-BINDING PROTEIN 4"/>
    <property type="match status" value="1"/>
</dbReference>
<dbReference type="Pfam" id="PF00061">
    <property type="entry name" value="Lipocalin"/>
    <property type="match status" value="1"/>
</dbReference>
<dbReference type="PIRSF" id="PIRSF036893">
    <property type="entry name" value="Lipocalin_ApoD"/>
    <property type="match status" value="1"/>
</dbReference>
<dbReference type="PIRSF" id="PIRSF500204">
    <property type="entry name" value="RBP_purpurin"/>
    <property type="match status" value="1"/>
</dbReference>
<dbReference type="PRINTS" id="PR00179">
    <property type="entry name" value="LIPOCALIN"/>
</dbReference>
<dbReference type="PRINTS" id="PR01174">
    <property type="entry name" value="RETINOLBNDNG"/>
</dbReference>
<dbReference type="SUPFAM" id="SSF50814">
    <property type="entry name" value="Lipocalins"/>
    <property type="match status" value="1"/>
</dbReference>
<dbReference type="PROSITE" id="PS00213">
    <property type="entry name" value="LIPOCALIN"/>
    <property type="match status" value="1"/>
</dbReference>
<comment type="function">
    <text evidence="2">RBP delivers retinol from the liver stores to the peripheral tissues. In plasma, the RBP-retinol complex interacts with transthyretin, this prevents its loss by filtration through the kidney glomeruli.</text>
</comment>
<comment type="subcellular location">
    <subcellularLocation>
        <location evidence="4">Secreted</location>
    </subcellularLocation>
</comment>
<comment type="similarity">
    <text evidence="5">Belongs to the calycin superfamily. Lipocalin family.</text>
</comment>
<protein>
    <recommendedName>
        <fullName>Retinol-binding protein 4-A</fullName>
    </recommendedName>
    <alternativeName>
        <fullName>Plasma retinol-binding protein 1</fullName>
        <shortName>PRBP-1</shortName>
    </alternativeName>
    <alternativeName>
        <fullName>Plasma retinol-binding protein II</fullName>
        <shortName>PRBP-I</shortName>
    </alternativeName>
</protein>
<evidence type="ECO:0000250" key="1">
    <source>
        <dbReference type="UniProtKB" id="P02753"/>
    </source>
</evidence>
<evidence type="ECO:0000250" key="2">
    <source>
        <dbReference type="UniProtKB" id="P04916"/>
    </source>
</evidence>
<evidence type="ECO:0000250" key="3">
    <source>
        <dbReference type="UniProtKB" id="P27485"/>
    </source>
</evidence>
<evidence type="ECO:0000269" key="4">
    <source>
    </source>
</evidence>
<evidence type="ECO:0000305" key="5"/>
<evidence type="ECO:0000305" key="6">
    <source>
    </source>
</evidence>
<accession>P24774</accession>
<accession>P80066</accession>
<reference key="1">
    <citation type="journal article" date="1992" name="Eur. J. Biochem.">
        <title>The primary structure of piscine (Oncorhynchus mykiss) retinol-binding protein and a comparison with the three-dimensional structure of mammalian retinol-binding protein.</title>
        <authorList>
            <person name="Zapponi M.C."/>
            <person name="Zanotti G."/>
            <person name="Stoppini M."/>
            <person name="Berni R."/>
        </authorList>
    </citation>
    <scope>PROTEIN SEQUENCE</scope>
    <scope>3D-STRUCTURE MODELING</scope>
</reference>
<reference key="2">
    <citation type="journal article" date="1992" name="Eur. J. Biochem.">
        <title>The piscine plasma retinol-binding protein. Purification, partial amino acid sequence and interaction with mammalian transthyretin of rainbow trout (Oncorhynchus mykiss) retinol-binding protein.</title>
        <authorList>
            <person name="Berni R."/>
            <person name="Stoppini M."/>
            <person name="Zapponi M.C."/>
        </authorList>
    </citation>
    <scope>PARTIAL PROTEIN SEQUENCE</scope>
    <scope>ACETYLATION AT SER-1</scope>
    <scope>SUBCELLULAR LOCATION</scope>
</reference>
<sequence length="176" mass="20139">SDCQVSNIQVMQNFDRSRYTGRWYAVAKKDPVGLFLLDNVVAQFSVDESGKVTATAHGRVIILNNWEMCANMFGTFEDTPDPAKFKMRYWGAASYLQTGNDDHWVIDTDYDNYAIHYSCREVDLDGTCLDGYSFIFSRHPTGLRPEDQKIVTDKKKEICFLGKYRRVGHTGFCESS</sequence>
<name>RET4A_ONCMY</name>
<proteinExistence type="evidence at protein level"/>
<feature type="chain" id="PRO_0000201029" description="Retinol-binding protein 4-A">
    <location>
        <begin position="1"/>
        <end position="176"/>
    </location>
</feature>
<feature type="binding site" evidence="3">
    <location>
        <position position="97"/>
    </location>
    <ligand>
        <name>substrate</name>
    </ligand>
</feature>
<feature type="modified residue" description="N-acetylserine" evidence="6">
    <location>
        <position position="1"/>
    </location>
</feature>
<feature type="disulfide bond" evidence="1">
    <location>
        <begin position="3"/>
        <end position="159"/>
    </location>
</feature>
<feature type="disulfide bond" evidence="1">
    <location>
        <begin position="69"/>
        <end position="173"/>
    </location>
</feature>
<feature type="disulfide bond" evidence="1">
    <location>
        <begin position="119"/>
        <end position="128"/>
    </location>
</feature>
<gene>
    <name type="primary">rbp4a</name>
</gene>
<organism>
    <name type="scientific">Oncorhynchus mykiss</name>
    <name type="common">Rainbow trout</name>
    <name type="synonym">Salmo gairdneri</name>
    <dbReference type="NCBI Taxonomy" id="8022"/>
    <lineage>
        <taxon>Eukaryota</taxon>
        <taxon>Metazoa</taxon>
        <taxon>Chordata</taxon>
        <taxon>Craniata</taxon>
        <taxon>Vertebrata</taxon>
        <taxon>Euteleostomi</taxon>
        <taxon>Actinopterygii</taxon>
        <taxon>Neopterygii</taxon>
        <taxon>Teleostei</taxon>
        <taxon>Protacanthopterygii</taxon>
        <taxon>Salmoniformes</taxon>
        <taxon>Salmonidae</taxon>
        <taxon>Salmoninae</taxon>
        <taxon>Oncorhynchus</taxon>
    </lineage>
</organism>
<keyword id="KW-0007">Acetylation</keyword>
<keyword id="KW-0903">Direct protein sequencing</keyword>
<keyword id="KW-1015">Disulfide bond</keyword>
<keyword id="KW-0683">Retinol-binding</keyword>
<keyword id="KW-0964">Secreted</keyword>
<keyword id="KW-0813">Transport</keyword>